<protein>
    <recommendedName>
        <fullName evidence="1">Adenylate kinase</fullName>
        <shortName evidence="1">AK</shortName>
        <ecNumber evidence="1">2.7.4.3</ecNumber>
    </recommendedName>
    <alternativeName>
        <fullName evidence="1">ATP-AMP transphosphorylase</fullName>
    </alternativeName>
    <alternativeName>
        <fullName evidence="1">ATP:AMP phosphotransferase</fullName>
    </alternativeName>
    <alternativeName>
        <fullName evidence="1">Adenylate monophosphate kinase</fullName>
    </alternativeName>
</protein>
<accession>B7IT40</accession>
<proteinExistence type="inferred from homology"/>
<comment type="function">
    <text evidence="1">Catalyzes the reversible transfer of the terminal phosphate group between ATP and AMP. Plays an important role in cellular energy homeostasis and in adenine nucleotide metabolism.</text>
</comment>
<comment type="catalytic activity">
    <reaction evidence="1">
        <text>AMP + ATP = 2 ADP</text>
        <dbReference type="Rhea" id="RHEA:12973"/>
        <dbReference type="ChEBI" id="CHEBI:30616"/>
        <dbReference type="ChEBI" id="CHEBI:456215"/>
        <dbReference type="ChEBI" id="CHEBI:456216"/>
        <dbReference type="EC" id="2.7.4.3"/>
    </reaction>
</comment>
<comment type="pathway">
    <text evidence="1">Purine metabolism; AMP biosynthesis via salvage pathway; AMP from ADP: step 1/1.</text>
</comment>
<comment type="subunit">
    <text evidence="1">Monomer.</text>
</comment>
<comment type="subcellular location">
    <subcellularLocation>
        <location evidence="1">Cytoplasm</location>
    </subcellularLocation>
</comment>
<comment type="domain">
    <text evidence="1">Consists of three domains, a large central CORE domain and two small peripheral domains, NMPbind and LID, which undergo movements during catalysis. The LID domain closes over the site of phosphoryl transfer upon ATP binding. Assembling and dissambling the active center during each catalytic cycle provides an effective means to prevent ATP hydrolysis. Some bacteria have evolved a zinc-coordinating structure that stabilizes the LID domain.</text>
</comment>
<comment type="similarity">
    <text evidence="1">Belongs to the adenylate kinase family.</text>
</comment>
<feature type="chain" id="PRO_1000118983" description="Adenylate kinase">
    <location>
        <begin position="1"/>
        <end position="216"/>
    </location>
</feature>
<feature type="region of interest" description="NMP" evidence="1">
    <location>
        <begin position="30"/>
        <end position="59"/>
    </location>
</feature>
<feature type="region of interest" description="LID" evidence="1">
    <location>
        <begin position="126"/>
        <end position="163"/>
    </location>
</feature>
<feature type="binding site" evidence="1">
    <location>
        <begin position="10"/>
        <end position="15"/>
    </location>
    <ligand>
        <name>ATP</name>
        <dbReference type="ChEBI" id="CHEBI:30616"/>
    </ligand>
</feature>
<feature type="binding site" evidence="1">
    <location>
        <position position="31"/>
    </location>
    <ligand>
        <name>AMP</name>
        <dbReference type="ChEBI" id="CHEBI:456215"/>
    </ligand>
</feature>
<feature type="binding site" evidence="1">
    <location>
        <position position="36"/>
    </location>
    <ligand>
        <name>AMP</name>
        <dbReference type="ChEBI" id="CHEBI:456215"/>
    </ligand>
</feature>
<feature type="binding site" evidence="1">
    <location>
        <begin position="57"/>
        <end position="59"/>
    </location>
    <ligand>
        <name>AMP</name>
        <dbReference type="ChEBI" id="CHEBI:456215"/>
    </ligand>
</feature>
<feature type="binding site" evidence="1">
    <location>
        <begin position="85"/>
        <end position="88"/>
    </location>
    <ligand>
        <name>AMP</name>
        <dbReference type="ChEBI" id="CHEBI:456215"/>
    </ligand>
</feature>
<feature type="binding site" evidence="1">
    <location>
        <position position="92"/>
    </location>
    <ligand>
        <name>AMP</name>
        <dbReference type="ChEBI" id="CHEBI:456215"/>
    </ligand>
</feature>
<feature type="binding site" evidence="1">
    <location>
        <position position="127"/>
    </location>
    <ligand>
        <name>ATP</name>
        <dbReference type="ChEBI" id="CHEBI:30616"/>
    </ligand>
</feature>
<feature type="binding site" evidence="1">
    <location>
        <position position="130"/>
    </location>
    <ligand>
        <name>Zn(2+)</name>
        <dbReference type="ChEBI" id="CHEBI:29105"/>
        <note>structural</note>
    </ligand>
</feature>
<feature type="binding site" evidence="1">
    <location>
        <position position="133"/>
    </location>
    <ligand>
        <name>Zn(2+)</name>
        <dbReference type="ChEBI" id="CHEBI:29105"/>
        <note>structural</note>
    </ligand>
</feature>
<feature type="binding site" evidence="1">
    <location>
        <begin position="136"/>
        <end position="137"/>
    </location>
    <ligand>
        <name>ATP</name>
        <dbReference type="ChEBI" id="CHEBI:30616"/>
    </ligand>
</feature>
<feature type="binding site" evidence="1">
    <location>
        <position position="150"/>
    </location>
    <ligand>
        <name>Zn(2+)</name>
        <dbReference type="ChEBI" id="CHEBI:29105"/>
        <note>structural</note>
    </ligand>
</feature>
<feature type="binding site" evidence="1">
    <location>
        <position position="153"/>
    </location>
    <ligand>
        <name>Zn(2+)</name>
        <dbReference type="ChEBI" id="CHEBI:29105"/>
        <note>structural</note>
    </ligand>
</feature>
<feature type="binding site" evidence="1">
    <location>
        <position position="160"/>
    </location>
    <ligand>
        <name>AMP</name>
        <dbReference type="ChEBI" id="CHEBI:456215"/>
    </ligand>
</feature>
<feature type="binding site" evidence="1">
    <location>
        <position position="171"/>
    </location>
    <ligand>
        <name>AMP</name>
        <dbReference type="ChEBI" id="CHEBI:456215"/>
    </ligand>
</feature>
<feature type="binding site" evidence="1">
    <location>
        <position position="199"/>
    </location>
    <ligand>
        <name>ATP</name>
        <dbReference type="ChEBI" id="CHEBI:30616"/>
    </ligand>
</feature>
<gene>
    <name evidence="1" type="primary">adk</name>
    <name type="ordered locus">BCG9842_B5174</name>
</gene>
<organism>
    <name type="scientific">Bacillus cereus (strain G9842)</name>
    <dbReference type="NCBI Taxonomy" id="405531"/>
    <lineage>
        <taxon>Bacteria</taxon>
        <taxon>Bacillati</taxon>
        <taxon>Bacillota</taxon>
        <taxon>Bacilli</taxon>
        <taxon>Bacillales</taxon>
        <taxon>Bacillaceae</taxon>
        <taxon>Bacillus</taxon>
        <taxon>Bacillus cereus group</taxon>
    </lineage>
</organism>
<dbReference type="EC" id="2.7.4.3" evidence="1"/>
<dbReference type="EMBL" id="CP001186">
    <property type="protein sequence ID" value="ACK93368.1"/>
    <property type="molecule type" value="Genomic_DNA"/>
</dbReference>
<dbReference type="RefSeq" id="WP_001048995.1">
    <property type="nucleotide sequence ID" value="NC_011772.1"/>
</dbReference>
<dbReference type="SMR" id="B7IT40"/>
<dbReference type="KEGG" id="bcg:BCG9842_B5174"/>
<dbReference type="HOGENOM" id="CLU_032354_1_2_9"/>
<dbReference type="UniPathway" id="UPA00588">
    <property type="reaction ID" value="UER00649"/>
</dbReference>
<dbReference type="Proteomes" id="UP000006744">
    <property type="component" value="Chromosome"/>
</dbReference>
<dbReference type="GO" id="GO:0005737">
    <property type="term" value="C:cytoplasm"/>
    <property type="evidence" value="ECO:0007669"/>
    <property type="project" value="UniProtKB-SubCell"/>
</dbReference>
<dbReference type="GO" id="GO:0004017">
    <property type="term" value="F:adenylate kinase activity"/>
    <property type="evidence" value="ECO:0007669"/>
    <property type="project" value="UniProtKB-UniRule"/>
</dbReference>
<dbReference type="GO" id="GO:0005524">
    <property type="term" value="F:ATP binding"/>
    <property type="evidence" value="ECO:0007669"/>
    <property type="project" value="UniProtKB-UniRule"/>
</dbReference>
<dbReference type="GO" id="GO:0008270">
    <property type="term" value="F:zinc ion binding"/>
    <property type="evidence" value="ECO:0007669"/>
    <property type="project" value="UniProtKB-UniRule"/>
</dbReference>
<dbReference type="GO" id="GO:0044209">
    <property type="term" value="P:AMP salvage"/>
    <property type="evidence" value="ECO:0007669"/>
    <property type="project" value="UniProtKB-UniRule"/>
</dbReference>
<dbReference type="CDD" id="cd01428">
    <property type="entry name" value="ADK"/>
    <property type="match status" value="1"/>
</dbReference>
<dbReference type="FunFam" id="3.40.50.300:FF:000106">
    <property type="entry name" value="Adenylate kinase mitochondrial"/>
    <property type="match status" value="1"/>
</dbReference>
<dbReference type="Gene3D" id="3.40.50.300">
    <property type="entry name" value="P-loop containing nucleotide triphosphate hydrolases"/>
    <property type="match status" value="1"/>
</dbReference>
<dbReference type="HAMAP" id="MF_00235">
    <property type="entry name" value="Adenylate_kinase_Adk"/>
    <property type="match status" value="1"/>
</dbReference>
<dbReference type="InterPro" id="IPR006259">
    <property type="entry name" value="Adenyl_kin_sub"/>
</dbReference>
<dbReference type="InterPro" id="IPR000850">
    <property type="entry name" value="Adenylat/UMP-CMP_kin"/>
</dbReference>
<dbReference type="InterPro" id="IPR033690">
    <property type="entry name" value="Adenylat_kinase_CS"/>
</dbReference>
<dbReference type="InterPro" id="IPR007862">
    <property type="entry name" value="Adenylate_kinase_lid-dom"/>
</dbReference>
<dbReference type="InterPro" id="IPR027417">
    <property type="entry name" value="P-loop_NTPase"/>
</dbReference>
<dbReference type="NCBIfam" id="TIGR01351">
    <property type="entry name" value="adk"/>
    <property type="match status" value="1"/>
</dbReference>
<dbReference type="NCBIfam" id="NF001380">
    <property type="entry name" value="PRK00279.1-2"/>
    <property type="match status" value="1"/>
</dbReference>
<dbReference type="NCBIfam" id="NF001381">
    <property type="entry name" value="PRK00279.1-3"/>
    <property type="match status" value="1"/>
</dbReference>
<dbReference type="NCBIfam" id="NF011100">
    <property type="entry name" value="PRK14527.1"/>
    <property type="match status" value="1"/>
</dbReference>
<dbReference type="PANTHER" id="PTHR23359">
    <property type="entry name" value="NUCLEOTIDE KINASE"/>
    <property type="match status" value="1"/>
</dbReference>
<dbReference type="Pfam" id="PF00406">
    <property type="entry name" value="ADK"/>
    <property type="match status" value="1"/>
</dbReference>
<dbReference type="Pfam" id="PF05191">
    <property type="entry name" value="ADK_lid"/>
    <property type="match status" value="1"/>
</dbReference>
<dbReference type="PRINTS" id="PR00094">
    <property type="entry name" value="ADENYLTKNASE"/>
</dbReference>
<dbReference type="SUPFAM" id="SSF52540">
    <property type="entry name" value="P-loop containing nucleoside triphosphate hydrolases"/>
    <property type="match status" value="1"/>
</dbReference>
<dbReference type="PROSITE" id="PS00113">
    <property type="entry name" value="ADENYLATE_KINASE"/>
    <property type="match status" value="1"/>
</dbReference>
<evidence type="ECO:0000255" key="1">
    <source>
        <dbReference type="HAMAP-Rule" id="MF_00235"/>
    </source>
</evidence>
<reference key="1">
    <citation type="submission" date="2008-10" db="EMBL/GenBank/DDBJ databases">
        <title>Genome sequence of Bacillus cereus G9842.</title>
        <authorList>
            <person name="Dodson R.J."/>
            <person name="Durkin A.S."/>
            <person name="Rosovitz M.J."/>
            <person name="Rasko D.A."/>
            <person name="Hoffmaster A."/>
            <person name="Ravel J."/>
            <person name="Sutton G."/>
        </authorList>
    </citation>
    <scope>NUCLEOTIDE SEQUENCE [LARGE SCALE GENOMIC DNA]</scope>
    <source>
        <strain>G9842</strain>
    </source>
</reference>
<sequence>MNLILMGLPGAGKGTQAEQIVAKYNIPHISTGDMFRAAMKAETEMGLQAKSFIDKGALVPDEVTIGIVRERLSQEDCVRGFLLDGFPRTVAQASALEEIMKDLGKKIDYVLNINVDSGLLLKRLTGRRICKECGATYHLEFNPPAKADVCDKCGGELYQRSDDNEETVANRLDVNIKQTKPLLDFYDELGYLKSINGEQDINKVFADIDVLIGGLA</sequence>
<name>KAD_BACC2</name>
<keyword id="KW-0067">ATP-binding</keyword>
<keyword id="KW-0963">Cytoplasm</keyword>
<keyword id="KW-0418">Kinase</keyword>
<keyword id="KW-0479">Metal-binding</keyword>
<keyword id="KW-0545">Nucleotide biosynthesis</keyword>
<keyword id="KW-0547">Nucleotide-binding</keyword>
<keyword id="KW-0808">Transferase</keyword>
<keyword id="KW-0862">Zinc</keyword>